<comment type="function">
    <text evidence="1">FABPs are thought to play a role in the intracellular transport of long-chain fatty acids and their acyl-CoA esters. FABP2 is probably involved in triglyceride-rich lipoprotein synthesis. Binds saturated long-chain fatty acids with a high affinity, but binds with a lower affinity to unsaturated long-chain fatty acids. FABP2 may also help maintain energy homeostasis by functioning as a lipid sensor (By similarity).</text>
</comment>
<comment type="subcellular location">
    <subcellularLocation>
        <location evidence="1">Cytoplasm</location>
    </subcellularLocation>
</comment>
<comment type="domain">
    <text evidence="1">Forms a beta-barrel structure that accommodates the hydrophobic ligand in its interior.</text>
</comment>
<comment type="similarity">
    <text evidence="3">Belongs to the calycin superfamily. Fatty-acid binding protein (FABP) family.</text>
</comment>
<evidence type="ECO:0000250" key="1"/>
<evidence type="ECO:0000250" key="2">
    <source>
        <dbReference type="UniProtKB" id="P02693"/>
    </source>
</evidence>
<evidence type="ECO:0000305" key="3"/>
<reference key="1">
    <citation type="submission" date="2005-01" db="EMBL/GenBank/DDBJ databases">
        <title>Analysis of sequences obtained from constructed full-length bovine cDNA libraries.</title>
        <authorList>
            <person name="Yu J."/>
            <person name="Meng Y."/>
            <person name="Wang Z."/>
            <person name="Hansen C."/>
            <person name="Li C."/>
            <person name="Moore S.S."/>
        </authorList>
    </citation>
    <scope>NUCLEOTIDE SEQUENCE [LARGE SCALE MRNA]</scope>
    <source>
        <tissue>Lymphoid epithelium</tissue>
    </source>
</reference>
<feature type="initiator methionine" description="Removed" evidence="2">
    <location>
        <position position="1"/>
    </location>
</feature>
<feature type="chain" id="PRO_0000236273" description="Fatty acid-binding protein, intestinal">
    <location>
        <begin position="2"/>
        <end position="132"/>
    </location>
</feature>
<feature type="binding site" evidence="2">
    <location>
        <position position="83"/>
    </location>
    <ligand>
        <name>hexadecanoate</name>
        <dbReference type="ChEBI" id="CHEBI:7896"/>
    </ligand>
</feature>
<feature type="binding site" evidence="2">
    <location>
        <position position="83"/>
    </location>
    <ligand>
        <name>tetradecanoate</name>
        <dbReference type="ChEBI" id="CHEBI:30807"/>
    </ligand>
</feature>
<feature type="binding site" evidence="2">
    <location>
        <position position="107"/>
    </location>
    <ligand>
        <name>hexadecanoate</name>
        <dbReference type="ChEBI" id="CHEBI:7896"/>
    </ligand>
</feature>
<feature type="binding site" evidence="2">
    <location>
        <position position="107"/>
    </location>
    <ligand>
        <name>tetradecanoate</name>
        <dbReference type="ChEBI" id="CHEBI:30807"/>
    </ligand>
</feature>
<feature type="modified residue" description="N-acetylalanine" evidence="2">
    <location>
        <position position="2"/>
    </location>
</feature>
<name>FABPI_BOVIN</name>
<proteinExistence type="evidence at transcript level"/>
<protein>
    <recommendedName>
        <fullName>Fatty acid-binding protein, intestinal</fullName>
    </recommendedName>
    <alternativeName>
        <fullName>Fatty acid-binding protein 2</fullName>
    </alternativeName>
    <alternativeName>
        <fullName>Intestinal-type fatty acid-binding protein</fullName>
        <shortName>I-FABP</shortName>
    </alternativeName>
</protein>
<accession>Q56JX9</accession>
<keyword id="KW-0007">Acetylation</keyword>
<keyword id="KW-0963">Cytoplasm</keyword>
<keyword id="KW-0446">Lipid-binding</keyword>
<keyword id="KW-1185">Reference proteome</keyword>
<keyword id="KW-0813">Transport</keyword>
<organism>
    <name type="scientific">Bos taurus</name>
    <name type="common">Bovine</name>
    <dbReference type="NCBI Taxonomy" id="9913"/>
    <lineage>
        <taxon>Eukaryota</taxon>
        <taxon>Metazoa</taxon>
        <taxon>Chordata</taxon>
        <taxon>Craniata</taxon>
        <taxon>Vertebrata</taxon>
        <taxon>Euteleostomi</taxon>
        <taxon>Mammalia</taxon>
        <taxon>Eutheria</taxon>
        <taxon>Laurasiatheria</taxon>
        <taxon>Artiodactyla</taxon>
        <taxon>Ruminantia</taxon>
        <taxon>Pecora</taxon>
        <taxon>Bovidae</taxon>
        <taxon>Bovinae</taxon>
        <taxon>Bos</taxon>
    </lineage>
</organism>
<dbReference type="EMBL" id="AY911349">
    <property type="protein sequence ID" value="AAW82116.1"/>
    <property type="molecule type" value="mRNA"/>
</dbReference>
<dbReference type="RefSeq" id="NP_001020503.1">
    <property type="nucleotide sequence ID" value="NM_001025332.1"/>
</dbReference>
<dbReference type="SMR" id="Q56JX9"/>
<dbReference type="FunCoup" id="Q56JX9">
    <property type="interactions" value="151"/>
</dbReference>
<dbReference type="STRING" id="9913.ENSBTAP00000022662"/>
<dbReference type="PaxDb" id="9913-ENSBTAP00000022662"/>
<dbReference type="GeneID" id="515768"/>
<dbReference type="KEGG" id="bta:515768"/>
<dbReference type="CTD" id="2169"/>
<dbReference type="eggNOG" id="KOG4015">
    <property type="taxonomic scope" value="Eukaryota"/>
</dbReference>
<dbReference type="InParanoid" id="Q56JX9"/>
<dbReference type="OrthoDB" id="9991853at2759"/>
<dbReference type="Proteomes" id="UP000009136">
    <property type="component" value="Unplaced"/>
</dbReference>
<dbReference type="GO" id="GO:0005829">
    <property type="term" value="C:cytosol"/>
    <property type="evidence" value="ECO:0000318"/>
    <property type="project" value="GO_Central"/>
</dbReference>
<dbReference type="GO" id="GO:0005634">
    <property type="term" value="C:nucleus"/>
    <property type="evidence" value="ECO:0000318"/>
    <property type="project" value="GO_Central"/>
</dbReference>
<dbReference type="GO" id="GO:0036041">
    <property type="term" value="F:long-chain fatty acid binding"/>
    <property type="evidence" value="ECO:0000318"/>
    <property type="project" value="GO_Central"/>
</dbReference>
<dbReference type="GO" id="GO:0015908">
    <property type="term" value="P:fatty acid transport"/>
    <property type="evidence" value="ECO:0000318"/>
    <property type="project" value="GO_Central"/>
</dbReference>
<dbReference type="CDD" id="cd19445">
    <property type="entry name" value="FABP2"/>
    <property type="match status" value="1"/>
</dbReference>
<dbReference type="FunFam" id="2.40.128.20:FF:000001">
    <property type="entry name" value="Fatty acid-binding protein, adipocyte"/>
    <property type="match status" value="1"/>
</dbReference>
<dbReference type="Gene3D" id="2.40.128.20">
    <property type="match status" value="1"/>
</dbReference>
<dbReference type="InterPro" id="IPR012674">
    <property type="entry name" value="Calycin"/>
</dbReference>
<dbReference type="InterPro" id="IPR031272">
    <property type="entry name" value="FABP2"/>
</dbReference>
<dbReference type="InterPro" id="IPR000463">
    <property type="entry name" value="Fatty_acid-bd"/>
</dbReference>
<dbReference type="InterPro" id="IPR031259">
    <property type="entry name" value="ILBP"/>
</dbReference>
<dbReference type="InterPro" id="IPR000566">
    <property type="entry name" value="Lipocln_cytosolic_FA-bd_dom"/>
</dbReference>
<dbReference type="PANTHER" id="PTHR11955">
    <property type="entry name" value="FATTY ACID BINDING PROTEIN"/>
    <property type="match status" value="1"/>
</dbReference>
<dbReference type="Pfam" id="PF00061">
    <property type="entry name" value="Lipocalin"/>
    <property type="match status" value="1"/>
</dbReference>
<dbReference type="PRINTS" id="PR00178">
    <property type="entry name" value="FATTYACIDBP"/>
</dbReference>
<dbReference type="SUPFAM" id="SSF50814">
    <property type="entry name" value="Lipocalins"/>
    <property type="match status" value="1"/>
</dbReference>
<dbReference type="PROSITE" id="PS00214">
    <property type="entry name" value="FABP"/>
    <property type="match status" value="1"/>
</dbReference>
<sequence>MAFDGTWKVDRNENYEKFMEKMGINVVKRKLAAHDNLKLIITQEGNKFTVKESSTFRSIEIIFELGVTFNYSLADGTELSGAWALEGDKLVGKFKRLDNGNALNTVREIIGGEMVQTYTYEGVEAKRIFKKE</sequence>
<gene>
    <name type="primary">FABP2</name>
    <name type="synonym">FABPI</name>
</gene>